<feature type="signal peptide" evidence="1">
    <location>
        <begin position="1"/>
        <end position="16"/>
    </location>
</feature>
<feature type="chain" id="PRO_0000323524" description="Membrane-bound lytic murein transglycosylase C">
    <location>
        <begin position="17"/>
        <end position="358"/>
    </location>
</feature>
<feature type="lipid moiety-binding region" description="N-palmitoyl cysteine" evidence="1">
    <location>
        <position position="17"/>
    </location>
</feature>
<feature type="lipid moiety-binding region" description="S-diacylglycerol cysteine" evidence="1">
    <location>
        <position position="17"/>
    </location>
</feature>
<organism>
    <name type="scientific">Yersinia pestis (strain Pestoides F)</name>
    <dbReference type="NCBI Taxonomy" id="386656"/>
    <lineage>
        <taxon>Bacteria</taxon>
        <taxon>Pseudomonadati</taxon>
        <taxon>Pseudomonadota</taxon>
        <taxon>Gammaproteobacteria</taxon>
        <taxon>Enterobacterales</taxon>
        <taxon>Yersiniaceae</taxon>
        <taxon>Yersinia</taxon>
    </lineage>
</organism>
<proteinExistence type="inferred from homology"/>
<name>MLTC_YERPP</name>
<keyword id="KW-0998">Cell outer membrane</keyword>
<keyword id="KW-0961">Cell wall biogenesis/degradation</keyword>
<keyword id="KW-0449">Lipoprotein</keyword>
<keyword id="KW-0456">Lyase</keyword>
<keyword id="KW-0472">Membrane</keyword>
<keyword id="KW-0564">Palmitate</keyword>
<keyword id="KW-0732">Signal</keyword>
<accession>A4TI58</accession>
<reference key="1">
    <citation type="submission" date="2007-02" db="EMBL/GenBank/DDBJ databases">
        <title>Complete sequence of chromosome of Yersinia pestis Pestoides F.</title>
        <authorList>
            <consortium name="US DOE Joint Genome Institute"/>
            <person name="Copeland A."/>
            <person name="Lucas S."/>
            <person name="Lapidus A."/>
            <person name="Barry K."/>
            <person name="Detter J.C."/>
            <person name="Glavina del Rio T."/>
            <person name="Hammon N."/>
            <person name="Israni S."/>
            <person name="Dalin E."/>
            <person name="Tice H."/>
            <person name="Pitluck S."/>
            <person name="Di Bartolo G."/>
            <person name="Chain P."/>
            <person name="Malfatti S."/>
            <person name="Shin M."/>
            <person name="Vergez L."/>
            <person name="Schmutz J."/>
            <person name="Larimer F."/>
            <person name="Land M."/>
            <person name="Hauser L."/>
            <person name="Worsham P."/>
            <person name="Chu M."/>
            <person name="Bearden S."/>
            <person name="Garcia E."/>
            <person name="Richardson P."/>
        </authorList>
    </citation>
    <scope>NUCLEOTIDE SEQUENCE [LARGE SCALE GENOMIC DNA]</scope>
    <source>
        <strain>Pestoides F</strain>
    </source>
</reference>
<comment type="function">
    <text evidence="1">Murein-degrading enzyme. May play a role in recycling of muropeptides during cell elongation and/or cell division.</text>
</comment>
<comment type="catalytic activity">
    <reaction evidence="1">
        <text>Exolytic cleavage of the (1-&gt;4)-beta-glycosidic linkage between N-acetylmuramic acid (MurNAc) and N-acetylglucosamine (GlcNAc) residues in peptidoglycan, from either the reducing or the non-reducing ends of the peptidoglycan chains, with concomitant formation of a 1,6-anhydrobond in the MurNAc residue.</text>
        <dbReference type="EC" id="4.2.2.n1"/>
    </reaction>
</comment>
<comment type="subcellular location">
    <subcellularLocation>
        <location evidence="1">Cell outer membrane</location>
        <topology evidence="1">Lipid-anchor</topology>
    </subcellularLocation>
</comment>
<comment type="similarity">
    <text evidence="1">Belongs to the transglycosylase Slt family.</text>
</comment>
<comment type="sequence caution" evidence="2">
    <conflict type="erroneous initiation">
        <sequence resource="EMBL-CDS" id="ABP38970"/>
    </conflict>
</comment>
<sequence>MKKILALLVIAPLLVSCSGNKNQVENEVFVKDTNGFEILMGQFAHNIENIWGLKEVLIAGPKDYVKYTDQYQTRSHINFDAGTITIETIATTNPAAHLRQAIITTLLMGDDPGSIDLYSDVNDIQISKEPFLYGQVLDNNGEPIRWEWRAAHFADYLLQNKMQTRTSGLHVISFVTIQLVPNHLDKRAHKYLPLVRKSAARYGVEESLILAIMQTESSFNPYAVSRSDALGLMQVVQHTAGKDVFKLKGKSGQPSRSYLFDPENNIDAGTAYLSILQNTYLGGIQNATSRRYAVITSYNGGAGSVLRVFHSDKNKAVGIINTMSPGDVFQTLTTKHPSGESRRYLVKVNSAQKNYRRY</sequence>
<dbReference type="EC" id="4.2.2.n1" evidence="1"/>
<dbReference type="EMBL" id="CP000668">
    <property type="protein sequence ID" value="ABP38970.1"/>
    <property type="status" value="ALT_INIT"/>
    <property type="molecule type" value="Genomic_DNA"/>
</dbReference>
<dbReference type="RefSeq" id="WP_002209995.1">
    <property type="nucleotide sequence ID" value="NZ_CP009715.1"/>
</dbReference>
<dbReference type="SMR" id="A4TI58"/>
<dbReference type="CAZy" id="GH23">
    <property type="family name" value="Glycoside Hydrolase Family 23"/>
</dbReference>
<dbReference type="GeneID" id="57973687"/>
<dbReference type="KEGG" id="ypp:YPDSF_0560"/>
<dbReference type="PATRIC" id="fig|386656.14.peg.1878"/>
<dbReference type="GO" id="GO:0009279">
    <property type="term" value="C:cell outer membrane"/>
    <property type="evidence" value="ECO:0007669"/>
    <property type="project" value="UniProtKB-SubCell"/>
</dbReference>
<dbReference type="GO" id="GO:0016798">
    <property type="term" value="F:hydrolase activity, acting on glycosyl bonds"/>
    <property type="evidence" value="ECO:0007669"/>
    <property type="project" value="InterPro"/>
</dbReference>
<dbReference type="GO" id="GO:0008933">
    <property type="term" value="F:peptidoglycan lytic transglycosylase activity"/>
    <property type="evidence" value="ECO:0007669"/>
    <property type="project" value="UniProtKB-UniRule"/>
</dbReference>
<dbReference type="GO" id="GO:0016998">
    <property type="term" value="P:cell wall macromolecule catabolic process"/>
    <property type="evidence" value="ECO:0007669"/>
    <property type="project" value="UniProtKB-UniRule"/>
</dbReference>
<dbReference type="GO" id="GO:0071555">
    <property type="term" value="P:cell wall organization"/>
    <property type="evidence" value="ECO:0007669"/>
    <property type="project" value="UniProtKB-KW"/>
</dbReference>
<dbReference type="GO" id="GO:0000270">
    <property type="term" value="P:peptidoglycan metabolic process"/>
    <property type="evidence" value="ECO:0007669"/>
    <property type="project" value="InterPro"/>
</dbReference>
<dbReference type="CDD" id="cd16893">
    <property type="entry name" value="LT_MltC_MltE"/>
    <property type="match status" value="1"/>
</dbReference>
<dbReference type="FunFam" id="1.10.530.10:FF:000002">
    <property type="entry name" value="Membrane-bound lytic murein transglycosylase C"/>
    <property type="match status" value="1"/>
</dbReference>
<dbReference type="Gene3D" id="1.10.530.10">
    <property type="match status" value="1"/>
</dbReference>
<dbReference type="HAMAP" id="MF_01616">
    <property type="entry name" value="MltC"/>
    <property type="match status" value="1"/>
</dbReference>
<dbReference type="InterPro" id="IPR023346">
    <property type="entry name" value="Lysozyme-like_dom_sf"/>
</dbReference>
<dbReference type="InterPro" id="IPR023664">
    <property type="entry name" value="Murein_transglycosylaseC"/>
</dbReference>
<dbReference type="InterPro" id="IPR024570">
    <property type="entry name" value="Murein_transglycosylaseC_N"/>
</dbReference>
<dbReference type="InterPro" id="IPR000189">
    <property type="entry name" value="Transglyc_AS"/>
</dbReference>
<dbReference type="InterPro" id="IPR008258">
    <property type="entry name" value="Transglycosylase_SLT_dom_1"/>
</dbReference>
<dbReference type="NCBIfam" id="NF008670">
    <property type="entry name" value="PRK11671.1"/>
    <property type="match status" value="1"/>
</dbReference>
<dbReference type="PANTHER" id="PTHR37423:SF2">
    <property type="entry name" value="MEMBRANE-BOUND LYTIC MUREIN TRANSGLYCOSYLASE C"/>
    <property type="match status" value="1"/>
</dbReference>
<dbReference type="PANTHER" id="PTHR37423">
    <property type="entry name" value="SOLUBLE LYTIC MUREIN TRANSGLYCOSYLASE-RELATED"/>
    <property type="match status" value="1"/>
</dbReference>
<dbReference type="Pfam" id="PF11873">
    <property type="entry name" value="Mltc_N"/>
    <property type="match status" value="1"/>
</dbReference>
<dbReference type="Pfam" id="PF01464">
    <property type="entry name" value="SLT"/>
    <property type="match status" value="1"/>
</dbReference>
<dbReference type="SUPFAM" id="SSF53955">
    <property type="entry name" value="Lysozyme-like"/>
    <property type="match status" value="1"/>
</dbReference>
<dbReference type="PROSITE" id="PS51257">
    <property type="entry name" value="PROKAR_LIPOPROTEIN"/>
    <property type="match status" value="1"/>
</dbReference>
<dbReference type="PROSITE" id="PS00922">
    <property type="entry name" value="TRANSGLYCOSYLASE"/>
    <property type="match status" value="1"/>
</dbReference>
<protein>
    <recommendedName>
        <fullName evidence="1">Membrane-bound lytic murein transglycosylase C</fullName>
        <ecNumber evidence="1">4.2.2.n1</ecNumber>
    </recommendedName>
    <alternativeName>
        <fullName evidence="1">Murein lyase C</fullName>
    </alternativeName>
</protein>
<gene>
    <name evidence="1" type="primary">mltC</name>
    <name type="ordered locus">YPDSF_0560</name>
</gene>
<evidence type="ECO:0000255" key="1">
    <source>
        <dbReference type="HAMAP-Rule" id="MF_01616"/>
    </source>
</evidence>
<evidence type="ECO:0000305" key="2"/>